<sequence>MEQKQSKSVAIWLFLCSIMIVLMVGIGGFTRLSKAGLSITEWNPITGAFPPLNERDWLQEKSKYETTPEYKTFNYGMSMEEFRTLYLIEYVHRLFARLTGLIFILPFIYFTLKKRISKKVVIRLSIALSFGVLQAFTGWYMVKSGLVAKPHVSHYMLTLHLLLALVIFALLSYQFFNYQVRQKQTKLKISGSTVHYVGIILILIVVQIIFGAFVAGLNAGLIYNTFPLMGGHIIPKDLFFLQPTWLNIFENRATVQFIHRTLALLILVLTTVLTIKNASVKSVYVMLLSVIIQIILGVVTLLLHIPITIAISHQMFSFILFGSGLCFLCYLRKQN</sequence>
<reference key="1">
    <citation type="journal article" date="2005" name="PLoS Biol.">
        <title>The Wolbachia genome of Brugia malayi: endosymbiont evolution within a human pathogenic nematode.</title>
        <authorList>
            <person name="Foster J."/>
            <person name="Ganatra M."/>
            <person name="Kamal I."/>
            <person name="Ware J."/>
            <person name="Makarova K."/>
            <person name="Ivanova N."/>
            <person name="Bhattacharyya A."/>
            <person name="Kapatral V."/>
            <person name="Kumar S."/>
            <person name="Posfai J."/>
            <person name="Vincze T."/>
            <person name="Ingram J."/>
            <person name="Moran L."/>
            <person name="Lapidus A."/>
            <person name="Omelchenko M."/>
            <person name="Kyrpides N."/>
            <person name="Ghedin E."/>
            <person name="Wang S."/>
            <person name="Goltsman E."/>
            <person name="Joukov V."/>
            <person name="Ostrovskaya O."/>
            <person name="Tsukerman K."/>
            <person name="Mazur M."/>
            <person name="Comb D."/>
            <person name="Koonin E."/>
            <person name="Slatko B."/>
        </authorList>
    </citation>
    <scope>NUCLEOTIDE SEQUENCE [LARGE SCALE GENOMIC DNA]</scope>
    <source>
        <strain>TRS</strain>
    </source>
</reference>
<organism>
    <name type="scientific">Wolbachia sp. subsp. Brugia malayi (strain TRS)</name>
    <dbReference type="NCBI Taxonomy" id="292805"/>
    <lineage>
        <taxon>Bacteria</taxon>
        <taxon>Pseudomonadati</taxon>
        <taxon>Pseudomonadota</taxon>
        <taxon>Alphaproteobacteria</taxon>
        <taxon>Rickettsiales</taxon>
        <taxon>Anaplasmataceae</taxon>
        <taxon>Wolbachieae</taxon>
        <taxon>Wolbachia</taxon>
    </lineage>
</organism>
<protein>
    <recommendedName>
        <fullName evidence="1">Heme A synthase</fullName>
        <shortName evidence="1">HAS</shortName>
        <ecNumber evidence="1">1.17.99.9</ecNumber>
    </recommendedName>
    <alternativeName>
        <fullName evidence="1">Cytochrome aa3-controlling protein</fullName>
    </alternativeName>
</protein>
<keyword id="KW-1003">Cell membrane</keyword>
<keyword id="KW-0350">Heme biosynthesis</keyword>
<keyword id="KW-0408">Iron</keyword>
<keyword id="KW-0472">Membrane</keyword>
<keyword id="KW-0479">Metal-binding</keyword>
<keyword id="KW-0560">Oxidoreductase</keyword>
<keyword id="KW-1185">Reference proteome</keyword>
<keyword id="KW-0812">Transmembrane</keyword>
<keyword id="KW-1133">Transmembrane helix</keyword>
<gene>
    <name evidence="1" type="primary">ctaA</name>
    <name type="ordered locus">Wbm0456</name>
</gene>
<proteinExistence type="inferred from homology"/>
<accession>Q5GSI0</accession>
<feature type="chain" id="PRO_0000349088" description="Heme A synthase">
    <location>
        <begin position="1"/>
        <end position="335"/>
    </location>
</feature>
<feature type="transmembrane region" description="Helical" evidence="1">
    <location>
        <begin position="9"/>
        <end position="29"/>
    </location>
</feature>
<feature type="transmembrane region" description="Helical" evidence="1">
    <location>
        <begin position="90"/>
        <end position="110"/>
    </location>
</feature>
<feature type="transmembrane region" description="Helical" evidence="1">
    <location>
        <begin position="120"/>
        <end position="140"/>
    </location>
</feature>
<feature type="transmembrane region" description="Helical" evidence="1">
    <location>
        <begin position="156"/>
        <end position="176"/>
    </location>
</feature>
<feature type="transmembrane region" description="Helical" evidence="1">
    <location>
        <begin position="197"/>
        <end position="217"/>
    </location>
</feature>
<feature type="transmembrane region" description="Helical" evidence="1">
    <location>
        <begin position="255"/>
        <end position="275"/>
    </location>
</feature>
<feature type="transmembrane region" description="Helical" evidence="1">
    <location>
        <begin position="283"/>
        <end position="303"/>
    </location>
</feature>
<feature type="transmembrane region" description="Helical" evidence="1">
    <location>
        <begin position="309"/>
        <end position="329"/>
    </location>
</feature>
<feature type="binding site" description="axial binding residue" evidence="1">
    <location>
        <position position="259"/>
    </location>
    <ligand>
        <name>heme</name>
        <dbReference type="ChEBI" id="CHEBI:30413"/>
    </ligand>
    <ligandPart>
        <name>Fe</name>
        <dbReference type="ChEBI" id="CHEBI:18248"/>
    </ligandPart>
</feature>
<feature type="binding site" description="axial binding residue" evidence="1">
    <location>
        <position position="313"/>
    </location>
    <ligand>
        <name>heme</name>
        <dbReference type="ChEBI" id="CHEBI:30413"/>
    </ligand>
    <ligandPart>
        <name>Fe</name>
        <dbReference type="ChEBI" id="CHEBI:18248"/>
    </ligandPart>
</feature>
<name>CTAA_WOLTR</name>
<comment type="function">
    <text evidence="1">Catalyzes the conversion of heme O to heme A by two successive hydroxylations of the methyl group at C8. The first hydroxylation forms heme I, the second hydroxylation results in an unstable dihydroxymethyl group, which spontaneously dehydrates, resulting in the formyl group of heme A.</text>
</comment>
<comment type="catalytic activity">
    <reaction evidence="1">
        <text>Fe(II)-heme o + 2 A + H2O = Fe(II)-heme a + 2 AH2</text>
        <dbReference type="Rhea" id="RHEA:63388"/>
        <dbReference type="ChEBI" id="CHEBI:13193"/>
        <dbReference type="ChEBI" id="CHEBI:15377"/>
        <dbReference type="ChEBI" id="CHEBI:17499"/>
        <dbReference type="ChEBI" id="CHEBI:60530"/>
        <dbReference type="ChEBI" id="CHEBI:61715"/>
        <dbReference type="EC" id="1.17.99.9"/>
    </reaction>
    <physiologicalReaction direction="left-to-right" evidence="1">
        <dbReference type="Rhea" id="RHEA:63389"/>
    </physiologicalReaction>
</comment>
<comment type="cofactor">
    <cofactor evidence="1">
        <name>heme b</name>
        <dbReference type="ChEBI" id="CHEBI:60344"/>
    </cofactor>
</comment>
<comment type="pathway">
    <text evidence="1">Porphyrin-containing compound metabolism; heme A biosynthesis; heme A from heme O: step 1/1.</text>
</comment>
<comment type="subunit">
    <text evidence="1">Interacts with CtaB.</text>
</comment>
<comment type="subcellular location">
    <subcellularLocation>
        <location evidence="1">Cell membrane</location>
        <topology evidence="1">Multi-pass membrane protein</topology>
    </subcellularLocation>
</comment>
<comment type="similarity">
    <text evidence="1">Belongs to the COX15/CtaA family. Type 2 subfamily.</text>
</comment>
<dbReference type="EC" id="1.17.99.9" evidence="1"/>
<dbReference type="EMBL" id="AE017321">
    <property type="protein sequence ID" value="AAW71044.1"/>
    <property type="molecule type" value="Genomic_DNA"/>
</dbReference>
<dbReference type="SMR" id="Q5GSI0"/>
<dbReference type="STRING" id="292805.Wbm0456"/>
<dbReference type="KEGG" id="wbm:Wbm0456"/>
<dbReference type="eggNOG" id="COG1612">
    <property type="taxonomic scope" value="Bacteria"/>
</dbReference>
<dbReference type="HOGENOM" id="CLU_017627_0_0_5"/>
<dbReference type="UniPathway" id="UPA00269">
    <property type="reaction ID" value="UER00713"/>
</dbReference>
<dbReference type="Proteomes" id="UP000000534">
    <property type="component" value="Chromosome"/>
</dbReference>
<dbReference type="GO" id="GO:0005886">
    <property type="term" value="C:plasma membrane"/>
    <property type="evidence" value="ECO:0007669"/>
    <property type="project" value="UniProtKB-SubCell"/>
</dbReference>
<dbReference type="GO" id="GO:0046872">
    <property type="term" value="F:metal ion binding"/>
    <property type="evidence" value="ECO:0007669"/>
    <property type="project" value="UniProtKB-KW"/>
</dbReference>
<dbReference type="GO" id="GO:0016653">
    <property type="term" value="F:oxidoreductase activity, acting on NAD(P)H, heme protein as acceptor"/>
    <property type="evidence" value="ECO:0007669"/>
    <property type="project" value="InterPro"/>
</dbReference>
<dbReference type="GO" id="GO:0006784">
    <property type="term" value="P:heme A biosynthetic process"/>
    <property type="evidence" value="ECO:0007669"/>
    <property type="project" value="UniProtKB-UniRule"/>
</dbReference>
<dbReference type="HAMAP" id="MF_01665">
    <property type="entry name" value="HemeA_synth_type2"/>
    <property type="match status" value="1"/>
</dbReference>
<dbReference type="InterPro" id="IPR003780">
    <property type="entry name" value="COX15/CtaA_fam"/>
</dbReference>
<dbReference type="InterPro" id="IPR023754">
    <property type="entry name" value="HemeA_Synthase_type2"/>
</dbReference>
<dbReference type="PANTHER" id="PTHR23289">
    <property type="entry name" value="CYTOCHROME C OXIDASE ASSEMBLY PROTEIN COX15"/>
    <property type="match status" value="1"/>
</dbReference>
<dbReference type="PANTHER" id="PTHR23289:SF2">
    <property type="entry name" value="CYTOCHROME C OXIDASE ASSEMBLY PROTEIN COX15 HOMOLOG"/>
    <property type="match status" value="1"/>
</dbReference>
<dbReference type="Pfam" id="PF02628">
    <property type="entry name" value="COX15-CtaA"/>
    <property type="match status" value="1"/>
</dbReference>
<evidence type="ECO:0000255" key="1">
    <source>
        <dbReference type="HAMAP-Rule" id="MF_01665"/>
    </source>
</evidence>